<gene>
    <name type="ordered locus">BCE33L3394</name>
</gene>
<evidence type="ECO:0000255" key="1">
    <source>
        <dbReference type="HAMAP-Rule" id="MF_01103"/>
    </source>
</evidence>
<keyword id="KW-0963">Cytoplasm</keyword>
<accession>Q637D9</accession>
<name>Y3394_BACCZ</name>
<reference key="1">
    <citation type="journal article" date="2006" name="J. Bacteriol.">
        <title>Pathogenomic sequence analysis of Bacillus cereus and Bacillus thuringiensis isolates closely related to Bacillus anthracis.</title>
        <authorList>
            <person name="Han C.S."/>
            <person name="Xie G."/>
            <person name="Challacombe J.F."/>
            <person name="Altherr M.R."/>
            <person name="Bhotika S.S."/>
            <person name="Bruce D."/>
            <person name="Campbell C.S."/>
            <person name="Campbell M.L."/>
            <person name="Chen J."/>
            <person name="Chertkov O."/>
            <person name="Cleland C."/>
            <person name="Dimitrijevic M."/>
            <person name="Doggett N.A."/>
            <person name="Fawcett J.J."/>
            <person name="Glavina T."/>
            <person name="Goodwin L.A."/>
            <person name="Hill K.K."/>
            <person name="Hitchcock P."/>
            <person name="Jackson P.J."/>
            <person name="Keim P."/>
            <person name="Kewalramani A.R."/>
            <person name="Longmire J."/>
            <person name="Lucas S."/>
            <person name="Malfatti S."/>
            <person name="McMurry K."/>
            <person name="Meincke L.J."/>
            <person name="Misra M."/>
            <person name="Moseman B.L."/>
            <person name="Mundt M."/>
            <person name="Munk A.C."/>
            <person name="Okinaka R.T."/>
            <person name="Parson-Quintana B."/>
            <person name="Reilly L.P."/>
            <person name="Richardson P."/>
            <person name="Robinson D.L."/>
            <person name="Rubin E."/>
            <person name="Saunders E."/>
            <person name="Tapia R."/>
            <person name="Tesmer J.G."/>
            <person name="Thayer N."/>
            <person name="Thompson L.S."/>
            <person name="Tice H."/>
            <person name="Ticknor L.O."/>
            <person name="Wills P.L."/>
            <person name="Brettin T.S."/>
            <person name="Gilna P."/>
        </authorList>
    </citation>
    <scope>NUCLEOTIDE SEQUENCE [LARGE SCALE GENOMIC DNA]</scope>
    <source>
        <strain>ZK / E33L</strain>
    </source>
</reference>
<proteinExistence type="inferred from homology"/>
<dbReference type="EMBL" id="CP000001">
    <property type="protein sequence ID" value="AAU16870.1"/>
    <property type="molecule type" value="Genomic_DNA"/>
</dbReference>
<dbReference type="RefSeq" id="WP_000948565.1">
    <property type="nucleotide sequence ID" value="NZ_CP009968.1"/>
</dbReference>
<dbReference type="SMR" id="Q637D9"/>
<dbReference type="KEGG" id="bcz:BCE33L3394"/>
<dbReference type="PATRIC" id="fig|288681.22.peg.2023"/>
<dbReference type="Proteomes" id="UP000002612">
    <property type="component" value="Chromosome"/>
</dbReference>
<dbReference type="GO" id="GO:0005737">
    <property type="term" value="C:cytoplasm"/>
    <property type="evidence" value="ECO:0007669"/>
    <property type="project" value="UniProtKB-SubCell"/>
</dbReference>
<dbReference type="Gene3D" id="1.10.287.540">
    <property type="entry name" value="Helix hairpin bin"/>
    <property type="match status" value="1"/>
</dbReference>
<dbReference type="HAMAP" id="MF_01103">
    <property type="entry name" value="UPF0291"/>
    <property type="match status" value="1"/>
</dbReference>
<dbReference type="InterPro" id="IPR009242">
    <property type="entry name" value="DUF896"/>
</dbReference>
<dbReference type="NCBIfam" id="NF002422">
    <property type="entry name" value="PRK01546.1"/>
    <property type="match status" value="1"/>
</dbReference>
<dbReference type="PANTHER" id="PTHR37300">
    <property type="entry name" value="UPF0291 PROTEIN CBO2609/CLC_2481"/>
    <property type="match status" value="1"/>
</dbReference>
<dbReference type="PANTHER" id="PTHR37300:SF1">
    <property type="entry name" value="UPF0291 PROTEIN YNZC"/>
    <property type="match status" value="1"/>
</dbReference>
<dbReference type="Pfam" id="PF05979">
    <property type="entry name" value="DUF896"/>
    <property type="match status" value="1"/>
</dbReference>
<dbReference type="SUPFAM" id="SSF158221">
    <property type="entry name" value="YnzC-like"/>
    <property type="match status" value="1"/>
</dbReference>
<organism>
    <name type="scientific">Bacillus cereus (strain ZK / E33L)</name>
    <dbReference type="NCBI Taxonomy" id="288681"/>
    <lineage>
        <taxon>Bacteria</taxon>
        <taxon>Bacillati</taxon>
        <taxon>Bacillota</taxon>
        <taxon>Bacilli</taxon>
        <taxon>Bacillales</taxon>
        <taxon>Bacillaceae</taxon>
        <taxon>Bacillus</taxon>
        <taxon>Bacillus cereus group</taxon>
    </lineage>
</organism>
<protein>
    <recommendedName>
        <fullName evidence="1">UPF0291 protein BCE33L3394</fullName>
    </recommendedName>
</protein>
<sequence length="79" mass="9138">MLSHELVERINFLAKKAKAEGLTEEEQRERQSLREQYLKGFRQNMLNELKGIKVVNEQGTDVTPAKLKALKKQDNAKLN</sequence>
<feature type="chain" id="PRO_0000094959" description="UPF0291 protein BCE33L3394">
    <location>
        <begin position="1"/>
        <end position="79"/>
    </location>
</feature>
<comment type="subcellular location">
    <subcellularLocation>
        <location evidence="1">Cytoplasm</location>
    </subcellularLocation>
</comment>
<comment type="similarity">
    <text evidence="1">Belongs to the UPF0291 family.</text>
</comment>